<evidence type="ECO:0000250" key="1"/>
<evidence type="ECO:0000305" key="2"/>
<feature type="chain" id="PRO_0000083810" description="3-isopropylmalate dehydrogenase">
    <location>
        <begin position="1"/>
        <end position="329"/>
    </location>
</feature>
<feature type="binding site" evidence="1">
    <location>
        <position position="83"/>
    </location>
    <ligand>
        <name>substrate</name>
    </ligand>
</feature>
<feature type="binding site" evidence="1">
    <location>
        <position position="93"/>
    </location>
    <ligand>
        <name>substrate</name>
    </ligand>
</feature>
<feature type="binding site" evidence="1">
    <location>
        <position position="114"/>
    </location>
    <ligand>
        <name>substrate</name>
    </ligand>
</feature>
<feature type="binding site" evidence="1">
    <location>
        <position position="200"/>
    </location>
    <ligand>
        <name>Mg(2+)</name>
        <dbReference type="ChEBI" id="CHEBI:18420"/>
    </ligand>
</feature>
<feature type="binding site" evidence="1">
    <location>
        <position position="200"/>
    </location>
    <ligand>
        <name>substrate</name>
    </ligand>
</feature>
<feature type="binding site" evidence="1">
    <location>
        <position position="224"/>
    </location>
    <ligand>
        <name>Mg(2+)</name>
        <dbReference type="ChEBI" id="CHEBI:18420"/>
    </ligand>
</feature>
<feature type="binding site" evidence="1">
    <location>
        <position position="228"/>
    </location>
    <ligand>
        <name>Mg(2+)</name>
        <dbReference type="ChEBI" id="CHEBI:18420"/>
    </ligand>
</feature>
<feature type="binding site" evidence="1">
    <location>
        <begin position="257"/>
        <end position="269"/>
    </location>
    <ligand>
        <name>NAD(+)</name>
        <dbReference type="ChEBI" id="CHEBI:57540"/>
    </ligand>
</feature>
<feature type="site" description="Important for catalysis" evidence="1">
    <location>
        <position position="121"/>
    </location>
</feature>
<feature type="site" description="Important for catalysis" evidence="1">
    <location>
        <position position="167"/>
    </location>
</feature>
<reference key="1">
    <citation type="journal article" date="1997" name="J. Bacteriol.">
        <title>Complete genome sequence of Methanobacterium thermoautotrophicum deltaH: functional analysis and comparative genomics.</title>
        <authorList>
            <person name="Smith D.R."/>
            <person name="Doucette-Stamm L.A."/>
            <person name="Deloughery C."/>
            <person name="Lee H.-M."/>
            <person name="Dubois J."/>
            <person name="Aldredge T."/>
            <person name="Bashirzadeh R."/>
            <person name="Blakely D."/>
            <person name="Cook R."/>
            <person name="Gilbert K."/>
            <person name="Harrison D."/>
            <person name="Hoang L."/>
            <person name="Keagle P."/>
            <person name="Lumm W."/>
            <person name="Pothier B."/>
            <person name="Qiu D."/>
            <person name="Spadafora R."/>
            <person name="Vicare R."/>
            <person name="Wang Y."/>
            <person name="Wierzbowski J."/>
            <person name="Gibson R."/>
            <person name="Jiwani N."/>
            <person name="Caruso A."/>
            <person name="Bush D."/>
            <person name="Safer H."/>
            <person name="Patwell D."/>
            <person name="Prabhakar S."/>
            <person name="McDougall S."/>
            <person name="Shimer G."/>
            <person name="Goyal A."/>
            <person name="Pietrovski S."/>
            <person name="Church G.M."/>
            <person name="Daniels C.J."/>
            <person name="Mao J.-I."/>
            <person name="Rice P."/>
            <person name="Noelling J."/>
            <person name="Reeve J.N."/>
        </authorList>
    </citation>
    <scope>NUCLEOTIDE SEQUENCE [LARGE SCALE GENOMIC DNA]</scope>
    <source>
        <strain>ATCC 29096 / DSM 1053 / JCM 10044 / NBRC 100330 / Delta H</strain>
    </source>
</reference>
<accession>O27441</accession>
<proteinExistence type="inferred from homology"/>
<keyword id="KW-0028">Amino-acid biosynthesis</keyword>
<keyword id="KW-0100">Branched-chain amino acid biosynthesis</keyword>
<keyword id="KW-0963">Cytoplasm</keyword>
<keyword id="KW-0432">Leucine biosynthesis</keyword>
<keyword id="KW-0460">Magnesium</keyword>
<keyword id="KW-0464">Manganese</keyword>
<keyword id="KW-0479">Metal-binding</keyword>
<keyword id="KW-0520">NAD</keyword>
<keyword id="KW-0560">Oxidoreductase</keyword>
<keyword id="KW-1185">Reference proteome</keyword>
<protein>
    <recommendedName>
        <fullName>3-isopropylmalate dehydrogenase</fullName>
        <shortName>3-IPM-DH</shortName>
        <shortName>IMDH</shortName>
        <ecNumber>1.1.1.85</ecNumber>
    </recommendedName>
    <alternativeName>
        <fullName>Beta-IPM dehydrogenase</fullName>
    </alternativeName>
</protein>
<dbReference type="EC" id="1.1.1.85"/>
<dbReference type="EMBL" id="AE000666">
    <property type="protein sequence ID" value="AAB85865.1"/>
    <property type="molecule type" value="Genomic_DNA"/>
</dbReference>
<dbReference type="PIR" id="F69051">
    <property type="entry name" value="F69051"/>
</dbReference>
<dbReference type="SMR" id="O27441"/>
<dbReference type="FunCoup" id="O27441">
    <property type="interactions" value="152"/>
</dbReference>
<dbReference type="STRING" id="187420.MTH_1388"/>
<dbReference type="PaxDb" id="187420-MTH_1388"/>
<dbReference type="EnsemblBacteria" id="AAB85865">
    <property type="protein sequence ID" value="AAB85865"/>
    <property type="gene ID" value="MTH_1388"/>
</dbReference>
<dbReference type="KEGG" id="mth:MTH_1388"/>
<dbReference type="PATRIC" id="fig|187420.15.peg.1353"/>
<dbReference type="HOGENOM" id="CLU_031953_0_1_2"/>
<dbReference type="InParanoid" id="O27441"/>
<dbReference type="UniPathway" id="UPA00048">
    <property type="reaction ID" value="UER00072"/>
</dbReference>
<dbReference type="Proteomes" id="UP000005223">
    <property type="component" value="Chromosome"/>
</dbReference>
<dbReference type="GO" id="GO:0005737">
    <property type="term" value="C:cytoplasm"/>
    <property type="evidence" value="ECO:0007669"/>
    <property type="project" value="UniProtKB-SubCell"/>
</dbReference>
<dbReference type="GO" id="GO:0003862">
    <property type="term" value="F:3-isopropylmalate dehydrogenase activity"/>
    <property type="evidence" value="ECO:0007669"/>
    <property type="project" value="UniProtKB-EC"/>
</dbReference>
<dbReference type="GO" id="GO:0004449">
    <property type="term" value="F:isocitrate dehydrogenase (NAD+) activity"/>
    <property type="evidence" value="ECO:0007669"/>
    <property type="project" value="TreeGrafter"/>
</dbReference>
<dbReference type="GO" id="GO:0000287">
    <property type="term" value="F:magnesium ion binding"/>
    <property type="evidence" value="ECO:0007669"/>
    <property type="project" value="InterPro"/>
</dbReference>
<dbReference type="GO" id="GO:0051287">
    <property type="term" value="F:NAD binding"/>
    <property type="evidence" value="ECO:0007669"/>
    <property type="project" value="InterPro"/>
</dbReference>
<dbReference type="GO" id="GO:0006102">
    <property type="term" value="P:isocitrate metabolic process"/>
    <property type="evidence" value="ECO:0007669"/>
    <property type="project" value="TreeGrafter"/>
</dbReference>
<dbReference type="GO" id="GO:0009098">
    <property type="term" value="P:L-leucine biosynthetic process"/>
    <property type="evidence" value="ECO:0007669"/>
    <property type="project" value="UniProtKB-UniPathway"/>
</dbReference>
<dbReference type="GO" id="GO:0006099">
    <property type="term" value="P:tricarboxylic acid cycle"/>
    <property type="evidence" value="ECO:0007669"/>
    <property type="project" value="TreeGrafter"/>
</dbReference>
<dbReference type="FunFam" id="3.40.718.10:FF:000019">
    <property type="entry name" value="Homoisocitrate dehydrogenase"/>
    <property type="match status" value="1"/>
</dbReference>
<dbReference type="Gene3D" id="3.40.718.10">
    <property type="entry name" value="Isopropylmalate Dehydrogenase"/>
    <property type="match status" value="1"/>
</dbReference>
<dbReference type="InterPro" id="IPR019818">
    <property type="entry name" value="IsoCit/isopropylmalate_DH_CS"/>
</dbReference>
<dbReference type="InterPro" id="IPR024084">
    <property type="entry name" value="IsoPropMal-DH-like_dom"/>
</dbReference>
<dbReference type="InterPro" id="IPR011828">
    <property type="entry name" value="LEU3_arc"/>
</dbReference>
<dbReference type="NCBIfam" id="TIGR02088">
    <property type="entry name" value="LEU3_arch"/>
    <property type="match status" value="1"/>
</dbReference>
<dbReference type="PANTHER" id="PTHR11835">
    <property type="entry name" value="DECARBOXYLATING DEHYDROGENASES-ISOCITRATE, ISOPROPYLMALATE, TARTRATE"/>
    <property type="match status" value="1"/>
</dbReference>
<dbReference type="PANTHER" id="PTHR11835:SF34">
    <property type="entry name" value="ISOCITRATE DEHYDROGENASE [NAD] SUBUNIT ALPHA, MITOCHONDRIAL"/>
    <property type="match status" value="1"/>
</dbReference>
<dbReference type="Pfam" id="PF00180">
    <property type="entry name" value="Iso_dh"/>
    <property type="match status" value="1"/>
</dbReference>
<dbReference type="SMART" id="SM01329">
    <property type="entry name" value="Iso_dh"/>
    <property type="match status" value="1"/>
</dbReference>
<dbReference type="SUPFAM" id="SSF53659">
    <property type="entry name" value="Isocitrate/Isopropylmalate dehydrogenase-like"/>
    <property type="match status" value="1"/>
</dbReference>
<dbReference type="PROSITE" id="PS00470">
    <property type="entry name" value="IDH_IMDH"/>
    <property type="match status" value="1"/>
</dbReference>
<organism>
    <name type="scientific">Methanothermobacter thermautotrophicus (strain ATCC 29096 / DSM 1053 / JCM 10044 / NBRC 100330 / Delta H)</name>
    <name type="common">Methanobacterium thermoautotrophicum</name>
    <dbReference type="NCBI Taxonomy" id="187420"/>
    <lineage>
        <taxon>Archaea</taxon>
        <taxon>Methanobacteriati</taxon>
        <taxon>Methanobacteriota</taxon>
        <taxon>Methanomada group</taxon>
        <taxon>Methanobacteria</taxon>
        <taxon>Methanobacteriales</taxon>
        <taxon>Methanobacteriaceae</taxon>
        <taxon>Methanothermobacter</taxon>
    </lineage>
</organism>
<comment type="function">
    <text evidence="1">Catalyzes the oxidation of 3-carboxy-2-hydroxy-4-methylpentanoate (3-isopropylmalate) to 3-carboxy-4-methyl-2-oxopentanoate. The product decarboxylates to 4-methyl-2 oxopentanoate (By similarity).</text>
</comment>
<comment type="catalytic activity">
    <reaction>
        <text>(2R,3S)-3-isopropylmalate + NAD(+) = 4-methyl-2-oxopentanoate + CO2 + NADH</text>
        <dbReference type="Rhea" id="RHEA:32271"/>
        <dbReference type="ChEBI" id="CHEBI:16526"/>
        <dbReference type="ChEBI" id="CHEBI:17865"/>
        <dbReference type="ChEBI" id="CHEBI:35121"/>
        <dbReference type="ChEBI" id="CHEBI:57540"/>
        <dbReference type="ChEBI" id="CHEBI:57945"/>
        <dbReference type="EC" id="1.1.1.85"/>
    </reaction>
</comment>
<comment type="cofactor">
    <cofactor evidence="1">
        <name>Mg(2+)</name>
        <dbReference type="ChEBI" id="CHEBI:18420"/>
    </cofactor>
    <cofactor evidence="1">
        <name>Mn(2+)</name>
        <dbReference type="ChEBI" id="CHEBI:29035"/>
    </cofactor>
    <text evidence="1">Binds 1 Mg(2+) or Mn(2+) ion per subunit.</text>
</comment>
<comment type="pathway">
    <text>Amino-acid biosynthesis; L-leucine biosynthesis; L-leucine from 3-methyl-2-oxobutanoate: step 3/4.</text>
</comment>
<comment type="subunit">
    <text evidence="1">Homotetramer.</text>
</comment>
<comment type="subcellular location">
    <subcellularLocation>
        <location evidence="1">Cytoplasm</location>
    </subcellularLocation>
</comment>
<comment type="similarity">
    <text evidence="2">Belongs to the isocitrate and isopropylmalate dehydrogenases family.</text>
</comment>
<name>LEU3_METTH</name>
<gene>
    <name type="primary">leuB</name>
    <name type="ordered locus">MTH_1388</name>
</gene>
<sequence>MKSMKIAVIPGDGIGVEVMEAALHILNTLDLDLEFIHADAGDACLKRTGTALPEETLEAVGEARATLFGAAGESAADVIVRLRREFDLFANLRPVKSLPGVPCLYPDLDFVIVRENTEDLYVGDEEYTPEGAVAKRIITRTASRRISQFAFQYAQKEGMQKVTAVHKANVLKKTDGIFRDEFYKVASEYPQMEATDYYVDATAMYLITQPQEFQTIVTTNLFGDILSDEAAGLIGGLGLAPSANIGEKNALFEPVHGSAPQIAGKNIANPTAMILTTTLMLKHLNKKQEAQKIEKALQKTLAEGLVTPDLGGKLGTMEMAAEIARHLED</sequence>